<keyword id="KW-0002">3D-structure</keyword>
<keyword id="KW-1003">Cell membrane</keyword>
<keyword id="KW-0449">Lipoprotein</keyword>
<keyword id="KW-0472">Membrane</keyword>
<keyword id="KW-0564">Palmitate</keyword>
<keyword id="KW-0592">Phosphate transport</keyword>
<keyword id="KW-1185">Reference proteome</keyword>
<keyword id="KW-0732">Signal</keyword>
<keyword id="KW-0813">Transport</keyword>
<organism evidence="7">
    <name type="scientific">Borreliella burgdorferi (strain ATCC 35210 / DSM 4680 / CIP 102532 / B31)</name>
    <name type="common">Borrelia burgdorferi</name>
    <dbReference type="NCBI Taxonomy" id="224326"/>
    <lineage>
        <taxon>Bacteria</taxon>
        <taxon>Pseudomonadati</taxon>
        <taxon>Spirochaetota</taxon>
        <taxon>Spirochaetia</taxon>
        <taxon>Spirochaetales</taxon>
        <taxon>Borreliaceae</taxon>
        <taxon>Borreliella</taxon>
    </lineage>
</organism>
<proteinExistence type="evidence at protein level"/>
<comment type="function">
    <text evidence="3 5">Binds inorganic phosphate with a Kd of 1.2 uM (PubMed:24318969). Part of the ABC transporter complex PstSACB involved in phosphate import (Probable).</text>
</comment>
<comment type="subunit">
    <text evidence="3 5">Monomer (in vitro) (PubMed:24318969). The complex is composed of two ATP-binding proteins (PstB), two transmembrane proteins (PstC and PstA) and a solute-binding protein (PstS) (Probable).</text>
</comment>
<comment type="subcellular location">
    <subcellularLocation>
        <location evidence="6">Cell membrane</location>
        <topology evidence="6">Lipid-anchor</topology>
    </subcellularLocation>
</comment>
<comment type="similarity">
    <text evidence="5">Belongs to the PstS family.</text>
</comment>
<dbReference type="EMBL" id="AE000783">
    <property type="protein sequence ID" value="AAC66609.2"/>
    <property type="molecule type" value="Genomic_DNA"/>
</dbReference>
<dbReference type="RefSeq" id="NP_212349.2">
    <property type="nucleotide sequence ID" value="NC_001318.1"/>
</dbReference>
<dbReference type="RefSeq" id="WP_002556814.1">
    <property type="nucleotide sequence ID" value="NC_001318.1"/>
</dbReference>
<dbReference type="PDB" id="4N13">
    <property type="method" value="X-ray"/>
    <property type="resolution" value="1.30 A"/>
    <property type="chains" value="A=20-279"/>
</dbReference>
<dbReference type="PDBsum" id="4N13"/>
<dbReference type="SMR" id="O51233"/>
<dbReference type="STRING" id="224326.BB_0215"/>
<dbReference type="TCDB" id="3.A.1.7.5">
    <property type="family name" value="the atp-binding cassette (abc) superfamily"/>
</dbReference>
<dbReference type="PaxDb" id="224326-BB_0215"/>
<dbReference type="EnsemblBacteria" id="AAC66609">
    <property type="protein sequence ID" value="AAC66609"/>
    <property type="gene ID" value="BB_0215"/>
</dbReference>
<dbReference type="KEGG" id="bbu:BB_0215"/>
<dbReference type="PATRIC" id="fig|224326.49.peg.612"/>
<dbReference type="HOGENOM" id="CLU_026228_5_1_12"/>
<dbReference type="OrthoDB" id="9790048at2"/>
<dbReference type="EvolutionaryTrace" id="O51233"/>
<dbReference type="Proteomes" id="UP000001807">
    <property type="component" value="Chromosome"/>
</dbReference>
<dbReference type="GO" id="GO:0043190">
    <property type="term" value="C:ATP-binding cassette (ABC) transporter complex"/>
    <property type="evidence" value="ECO:0000317"/>
    <property type="project" value="UniProtKB"/>
</dbReference>
<dbReference type="GO" id="GO:0005315">
    <property type="term" value="F:phosphate transmembrane transporter activity"/>
    <property type="evidence" value="ECO:0000317"/>
    <property type="project" value="UniProtKB"/>
</dbReference>
<dbReference type="GO" id="GO:0006817">
    <property type="term" value="P:phosphate ion transport"/>
    <property type="evidence" value="ECO:0000314"/>
    <property type="project" value="UniProtKB"/>
</dbReference>
<dbReference type="Gene3D" id="3.40.190.10">
    <property type="entry name" value="Periplasmic binding protein-like II"/>
    <property type="match status" value="2"/>
</dbReference>
<dbReference type="InterPro" id="IPR024370">
    <property type="entry name" value="PBP_domain"/>
</dbReference>
<dbReference type="InterPro" id="IPR050811">
    <property type="entry name" value="Phosphate_ABC_transporter"/>
</dbReference>
<dbReference type="PANTHER" id="PTHR30570">
    <property type="entry name" value="PERIPLASMIC PHOSPHATE BINDING COMPONENT OF PHOSPHATE ABC TRANSPORTER"/>
    <property type="match status" value="1"/>
</dbReference>
<dbReference type="PANTHER" id="PTHR30570:SF1">
    <property type="entry name" value="PHOSPHATE-BINDING PROTEIN PSTS"/>
    <property type="match status" value="1"/>
</dbReference>
<dbReference type="Pfam" id="PF12849">
    <property type="entry name" value="PBP_like_2"/>
    <property type="match status" value="1"/>
</dbReference>
<dbReference type="SUPFAM" id="SSF53850">
    <property type="entry name" value="Periplasmic binding protein-like II"/>
    <property type="match status" value="1"/>
</dbReference>
<feature type="signal peptide" evidence="2">
    <location>
        <begin position="1"/>
        <end position="18"/>
    </location>
</feature>
<feature type="chain" id="PRO_0000436554" description="Phosphate-binding protein PstS">
    <location>
        <begin position="19"/>
        <end position="279"/>
    </location>
</feature>
<feature type="binding site" evidence="1">
    <location>
        <begin position="33"/>
        <end position="35"/>
    </location>
    <ligand>
        <name>phosphate</name>
        <dbReference type="ChEBI" id="CHEBI:43474"/>
    </ligand>
</feature>
<feature type="binding site" evidence="1">
    <location>
        <position position="63"/>
    </location>
    <ligand>
        <name>phosphate</name>
        <dbReference type="ChEBI" id="CHEBI:43474"/>
    </ligand>
</feature>
<feature type="binding site" evidence="1">
    <location>
        <begin position="151"/>
        <end position="153"/>
    </location>
    <ligand>
        <name>phosphate</name>
        <dbReference type="ChEBI" id="CHEBI:43474"/>
    </ligand>
</feature>
<feature type="lipid moiety-binding region" description="N-palmitoyl cysteine" evidence="2">
    <location>
        <position position="19"/>
    </location>
</feature>
<feature type="lipid moiety-binding region" description="S-diacylglycerol cysteine" evidence="2">
    <location>
        <position position="19"/>
    </location>
</feature>
<feature type="strand" evidence="10">
    <location>
        <begin position="26"/>
        <end position="32"/>
    </location>
</feature>
<feature type="helix" evidence="10">
    <location>
        <begin position="34"/>
        <end position="36"/>
    </location>
</feature>
<feature type="helix" evidence="10">
    <location>
        <begin position="37"/>
        <end position="50"/>
    </location>
</feature>
<feature type="strand" evidence="10">
    <location>
        <begin position="54"/>
        <end position="61"/>
    </location>
</feature>
<feature type="helix" evidence="10">
    <location>
        <begin position="63"/>
        <end position="71"/>
    </location>
</feature>
<feature type="strand" evidence="10">
    <location>
        <begin position="76"/>
        <end position="82"/>
    </location>
</feature>
<feature type="helix" evidence="10">
    <location>
        <begin position="86"/>
        <end position="90"/>
    </location>
</feature>
<feature type="strand" evidence="10">
    <location>
        <begin position="94"/>
        <end position="107"/>
    </location>
</feature>
<feature type="helix" evidence="10">
    <location>
        <begin position="118"/>
        <end position="125"/>
    </location>
</feature>
<feature type="helix" evidence="10">
    <location>
        <begin position="132"/>
        <end position="135"/>
    </location>
</feature>
<feature type="strand" evidence="10">
    <location>
        <begin position="143"/>
        <end position="147"/>
    </location>
</feature>
<feature type="helix" evidence="10">
    <location>
        <begin position="152"/>
        <end position="160"/>
    </location>
</feature>
<feature type="helix" evidence="10">
    <location>
        <begin position="162"/>
        <end position="165"/>
    </location>
</feature>
<feature type="turn" evidence="10">
    <location>
        <begin position="169"/>
        <end position="171"/>
    </location>
</feature>
<feature type="strand" evidence="10">
    <location>
        <begin position="179"/>
        <end position="183"/>
    </location>
</feature>
<feature type="helix" evidence="10">
    <location>
        <begin position="184"/>
        <end position="193"/>
    </location>
</feature>
<feature type="strand" evidence="10">
    <location>
        <begin position="197"/>
        <end position="202"/>
    </location>
</feature>
<feature type="helix" evidence="10">
    <location>
        <begin position="203"/>
        <end position="205"/>
    </location>
</feature>
<feature type="helix" evidence="10">
    <location>
        <begin position="206"/>
        <end position="211"/>
    </location>
</feature>
<feature type="helix" evidence="10">
    <location>
        <begin position="226"/>
        <end position="230"/>
    </location>
</feature>
<feature type="strand" evidence="10">
    <location>
        <begin position="236"/>
        <end position="244"/>
    </location>
</feature>
<feature type="helix" evidence="10">
    <location>
        <begin position="251"/>
        <end position="260"/>
    </location>
</feature>
<feature type="helix" evidence="10">
    <location>
        <begin position="263"/>
        <end position="271"/>
    </location>
</feature>
<sequence length="279" mass="31118">MKKVIILIFMLSTSLLYNCKNQDNEKIVSIGGSTTVSPILDEMILRYNKINNNTKVTYDAQGSSVGINGLFNKIYKIAISSRDLTKEEIEQGAKETVFAYDALIFITSPEIKITNITEENLAKILNGEIQNWKQVGGPDAKINFINRDSSSGSYSSIKDLLLNKIFKTHEEAQFRQDGIVVKSNGEVIEKTSLTPHSIGYIGLGYAKNSIEKGLNILSVNSTYPTKETINSNKYTIKRNLIIVTNNKYEDKSVTQFIDFMTSSTGQDIVEEQGFLGIKT</sequence>
<name>PSTS_BORBU</name>
<protein>
    <recommendedName>
        <fullName evidence="4">Phosphate-binding protein PstS</fullName>
        <shortName>PBP</shortName>
    </recommendedName>
</protein>
<gene>
    <name evidence="4" type="primary">pstS</name>
    <name evidence="7" type="ordered locus">BB_0215</name>
</gene>
<reference evidence="7" key="1">
    <citation type="journal article" date="1997" name="Nature">
        <title>Genomic sequence of a Lyme disease spirochaete, Borrelia burgdorferi.</title>
        <authorList>
            <person name="Fraser C.M."/>
            <person name="Casjens S."/>
            <person name="Huang W.M."/>
            <person name="Sutton G.G."/>
            <person name="Clayton R.A."/>
            <person name="Lathigra R."/>
            <person name="White O."/>
            <person name="Ketchum K.A."/>
            <person name="Dodson R.J."/>
            <person name="Hickey E.K."/>
            <person name="Gwinn M.L."/>
            <person name="Dougherty B.A."/>
            <person name="Tomb J.-F."/>
            <person name="Fleischmann R.D."/>
            <person name="Richardson D.L."/>
            <person name="Peterson J.D."/>
            <person name="Kerlavage A.R."/>
            <person name="Quackenbush J."/>
            <person name="Salzberg S.L."/>
            <person name="Hanson M."/>
            <person name="van Vugt R."/>
            <person name="Palmer N."/>
            <person name="Adams M.D."/>
            <person name="Gocayne J.D."/>
            <person name="Weidman J.F."/>
            <person name="Utterback T.R."/>
            <person name="Watthey L."/>
            <person name="McDonald L.A."/>
            <person name="Artiach P."/>
            <person name="Bowman C."/>
            <person name="Garland S.A."/>
            <person name="Fujii C."/>
            <person name="Cotton M.D."/>
            <person name="Horst K."/>
            <person name="Roberts K.M."/>
            <person name="Hatch B."/>
            <person name="Smith H.O."/>
            <person name="Venter J.C."/>
        </authorList>
    </citation>
    <scope>NUCLEOTIDE SEQUENCE [LARGE SCALE GENOMIC DNA]</scope>
    <source>
        <strain evidence="8">ATCC 35210 / DSM 4680 / CIP 102532 / B31</strain>
    </source>
</reference>
<reference evidence="9" key="2">
    <citation type="journal article" date="2014" name="Protein Sci.">
        <title>Sequence, biophysical, and structural analyses of the PstS lipoprotein (BB0215) from Borrelia burgdorferi reveal a likely binding component of an ABC-type phosphate transporter.</title>
        <authorList>
            <person name="Brautigam C.A."/>
            <person name="Ouyang Z."/>
            <person name="Deka R.K."/>
            <person name="Norgard M.V."/>
        </authorList>
    </citation>
    <scope>X-RAY CRYSTALLOGRAPHY (1.30 ANGSTROMS) OF 20-279</scope>
    <scope>FUNCTION</scope>
    <scope>PHOSPHATE-BINDING</scope>
    <scope>SUBUNIT</scope>
    <source>
        <strain evidence="4">ATCC 35210 / DSM 4680 / CIP 102532 / B31</strain>
    </source>
</reference>
<evidence type="ECO:0000250" key="1">
    <source>
        <dbReference type="UniProtKB" id="P9WGT7"/>
    </source>
</evidence>
<evidence type="ECO:0000255" key="2"/>
<evidence type="ECO:0000269" key="3">
    <source>
    </source>
</evidence>
<evidence type="ECO:0000303" key="4">
    <source>
    </source>
</evidence>
<evidence type="ECO:0000305" key="5"/>
<evidence type="ECO:0000305" key="6">
    <source>
    </source>
</evidence>
<evidence type="ECO:0000312" key="7">
    <source>
        <dbReference type="EMBL" id="AAC66609.2"/>
    </source>
</evidence>
<evidence type="ECO:0000312" key="8">
    <source>
        <dbReference type="Proteomes" id="UP000001807"/>
    </source>
</evidence>
<evidence type="ECO:0007744" key="9">
    <source>
        <dbReference type="PDB" id="4N13"/>
    </source>
</evidence>
<evidence type="ECO:0007829" key="10">
    <source>
        <dbReference type="PDB" id="4N13"/>
    </source>
</evidence>
<accession>O51233</accession>